<organism>
    <name type="scientific">Chromobacterium violaceum (strain ATCC 12472 / DSM 30191 / JCM 1249 / CCUG 213 / NBRC 12614 / NCIMB 9131 / NCTC 9757 / MK)</name>
    <dbReference type="NCBI Taxonomy" id="243365"/>
    <lineage>
        <taxon>Bacteria</taxon>
        <taxon>Pseudomonadati</taxon>
        <taxon>Pseudomonadota</taxon>
        <taxon>Betaproteobacteria</taxon>
        <taxon>Neisseriales</taxon>
        <taxon>Chromobacteriaceae</taxon>
        <taxon>Chromobacterium</taxon>
    </lineage>
</organism>
<dbReference type="EC" id="2.1.1.228" evidence="1"/>
<dbReference type="EMBL" id="AE016825">
    <property type="protein sequence ID" value="AAQ61335.1"/>
    <property type="status" value="ALT_INIT"/>
    <property type="molecule type" value="Genomic_DNA"/>
</dbReference>
<dbReference type="RefSeq" id="WP_043596678.1">
    <property type="nucleotide sequence ID" value="NC_005085.1"/>
</dbReference>
<dbReference type="SMR" id="Q7MBD6"/>
<dbReference type="STRING" id="243365.CV_3673"/>
<dbReference type="GeneID" id="66364906"/>
<dbReference type="KEGG" id="cvi:CV_3673"/>
<dbReference type="eggNOG" id="COG0336">
    <property type="taxonomic scope" value="Bacteria"/>
</dbReference>
<dbReference type="HOGENOM" id="CLU_047363_0_2_4"/>
<dbReference type="OrthoDB" id="9807416at2"/>
<dbReference type="Proteomes" id="UP000001424">
    <property type="component" value="Chromosome"/>
</dbReference>
<dbReference type="GO" id="GO:0005829">
    <property type="term" value="C:cytosol"/>
    <property type="evidence" value="ECO:0007669"/>
    <property type="project" value="TreeGrafter"/>
</dbReference>
<dbReference type="GO" id="GO:0052906">
    <property type="term" value="F:tRNA (guanine(37)-N1)-methyltransferase activity"/>
    <property type="evidence" value="ECO:0007669"/>
    <property type="project" value="UniProtKB-UniRule"/>
</dbReference>
<dbReference type="GO" id="GO:0002939">
    <property type="term" value="P:tRNA N1-guanine methylation"/>
    <property type="evidence" value="ECO:0007669"/>
    <property type="project" value="TreeGrafter"/>
</dbReference>
<dbReference type="CDD" id="cd18080">
    <property type="entry name" value="TrmD-like"/>
    <property type="match status" value="1"/>
</dbReference>
<dbReference type="FunFam" id="1.10.1270.20:FF:000001">
    <property type="entry name" value="tRNA (guanine-N(1)-)-methyltransferase"/>
    <property type="match status" value="1"/>
</dbReference>
<dbReference type="FunFam" id="3.40.1280.10:FF:000001">
    <property type="entry name" value="tRNA (guanine-N(1)-)-methyltransferase"/>
    <property type="match status" value="1"/>
</dbReference>
<dbReference type="Gene3D" id="3.40.1280.10">
    <property type="match status" value="1"/>
</dbReference>
<dbReference type="Gene3D" id="1.10.1270.20">
    <property type="entry name" value="tRNA(m1g37)methyltransferase, domain 2"/>
    <property type="match status" value="1"/>
</dbReference>
<dbReference type="HAMAP" id="MF_00605">
    <property type="entry name" value="TrmD"/>
    <property type="match status" value="1"/>
</dbReference>
<dbReference type="InterPro" id="IPR029028">
    <property type="entry name" value="Alpha/beta_knot_MTases"/>
</dbReference>
<dbReference type="InterPro" id="IPR023148">
    <property type="entry name" value="tRNA_m1G_MeTrfase_C_sf"/>
</dbReference>
<dbReference type="InterPro" id="IPR002649">
    <property type="entry name" value="tRNA_m1G_MeTrfase_TrmD"/>
</dbReference>
<dbReference type="InterPro" id="IPR029026">
    <property type="entry name" value="tRNA_m1G_MTases_N"/>
</dbReference>
<dbReference type="InterPro" id="IPR016009">
    <property type="entry name" value="tRNA_MeTrfase_TRMD/TRM10"/>
</dbReference>
<dbReference type="NCBIfam" id="NF000648">
    <property type="entry name" value="PRK00026.1"/>
    <property type="match status" value="1"/>
</dbReference>
<dbReference type="NCBIfam" id="TIGR00088">
    <property type="entry name" value="trmD"/>
    <property type="match status" value="1"/>
</dbReference>
<dbReference type="PANTHER" id="PTHR46417">
    <property type="entry name" value="TRNA (GUANINE-N(1)-)-METHYLTRANSFERASE"/>
    <property type="match status" value="1"/>
</dbReference>
<dbReference type="PANTHER" id="PTHR46417:SF1">
    <property type="entry name" value="TRNA (GUANINE-N(1)-)-METHYLTRANSFERASE"/>
    <property type="match status" value="1"/>
</dbReference>
<dbReference type="Pfam" id="PF01746">
    <property type="entry name" value="tRNA_m1G_MT"/>
    <property type="match status" value="1"/>
</dbReference>
<dbReference type="PIRSF" id="PIRSF000386">
    <property type="entry name" value="tRNA_mtase"/>
    <property type="match status" value="1"/>
</dbReference>
<dbReference type="SUPFAM" id="SSF75217">
    <property type="entry name" value="alpha/beta knot"/>
    <property type="match status" value="1"/>
</dbReference>
<accession>Q7MBD6</accession>
<protein>
    <recommendedName>
        <fullName evidence="1">tRNA (guanine-N(1)-)-methyltransferase</fullName>
        <ecNumber evidence="1">2.1.1.228</ecNumber>
    </recommendedName>
    <alternativeName>
        <fullName evidence="1">M1G-methyltransferase</fullName>
    </alternativeName>
    <alternativeName>
        <fullName evidence="1">tRNA [GM37] methyltransferase</fullName>
    </alternativeName>
</protein>
<keyword id="KW-0963">Cytoplasm</keyword>
<keyword id="KW-0489">Methyltransferase</keyword>
<keyword id="KW-1185">Reference proteome</keyword>
<keyword id="KW-0949">S-adenosyl-L-methionine</keyword>
<keyword id="KW-0808">Transferase</keyword>
<keyword id="KW-0819">tRNA processing</keyword>
<evidence type="ECO:0000255" key="1">
    <source>
        <dbReference type="HAMAP-Rule" id="MF_00605"/>
    </source>
</evidence>
<evidence type="ECO:0000305" key="2"/>
<name>TRMD_CHRVO</name>
<proteinExistence type="inferred from homology"/>
<reference key="1">
    <citation type="journal article" date="2003" name="Proc. Natl. Acad. Sci. U.S.A.">
        <title>The complete genome sequence of Chromobacterium violaceum reveals remarkable and exploitable bacterial adaptability.</title>
        <authorList>
            <person name="Vasconcelos A.T.R."/>
            <person name="de Almeida D.F."/>
            <person name="Hungria M."/>
            <person name="Guimaraes C.T."/>
            <person name="Antonio R.V."/>
            <person name="Almeida F.C."/>
            <person name="de Almeida L.G.P."/>
            <person name="de Almeida R."/>
            <person name="Alves-Gomes J.A."/>
            <person name="Andrade E.M."/>
            <person name="Araripe J."/>
            <person name="de Araujo M.F.F."/>
            <person name="Astolfi-Filho S."/>
            <person name="Azevedo V."/>
            <person name="Baptista A.J."/>
            <person name="Bataus L.A.M."/>
            <person name="Batista J.S."/>
            <person name="Belo A."/>
            <person name="van den Berg C."/>
            <person name="Bogo M."/>
            <person name="Bonatto S."/>
            <person name="Bordignon J."/>
            <person name="Brigido M.M."/>
            <person name="Brito C.A."/>
            <person name="Brocchi M."/>
            <person name="Burity H.A."/>
            <person name="Camargo A.A."/>
            <person name="Cardoso D.D.P."/>
            <person name="Carneiro N.P."/>
            <person name="Carraro D.M."/>
            <person name="Carvalho C.M.B."/>
            <person name="Cascardo J.C.M."/>
            <person name="Cavada B.S."/>
            <person name="Chueire L.M.O."/>
            <person name="Creczynski-Pasa T.B."/>
            <person name="Cunha-Junior N.C."/>
            <person name="Fagundes N."/>
            <person name="Falcao C.L."/>
            <person name="Fantinatti F."/>
            <person name="Farias I.P."/>
            <person name="Felipe M.S.S."/>
            <person name="Ferrari L.P."/>
            <person name="Ferro J.A."/>
            <person name="Ferro M.I.T."/>
            <person name="Franco G.R."/>
            <person name="Freitas N.S.A."/>
            <person name="Furlan L.R."/>
            <person name="Gazzinelli R.T."/>
            <person name="Gomes E.A."/>
            <person name="Goncalves P.R."/>
            <person name="Grangeiro T.B."/>
            <person name="Grattapaglia D."/>
            <person name="Grisard E.C."/>
            <person name="Hanna E.S."/>
            <person name="Jardim S.N."/>
            <person name="Laurino J."/>
            <person name="Leoi L.C.T."/>
            <person name="Lima L.F.A."/>
            <person name="Loureiro M.F."/>
            <person name="Lyra M.C.C.P."/>
            <person name="Madeira H.M.F."/>
            <person name="Manfio G.P."/>
            <person name="Maranhao A.Q."/>
            <person name="Martins W.S."/>
            <person name="di Mauro S.M.Z."/>
            <person name="de Medeiros S.R.B."/>
            <person name="Meissner R.V."/>
            <person name="Moreira M.A.M."/>
            <person name="Nascimento F.F."/>
            <person name="Nicolas M.F."/>
            <person name="Oliveira J.G."/>
            <person name="Oliveira S.C."/>
            <person name="Paixao R.F.C."/>
            <person name="Parente J.A."/>
            <person name="Pedrosa F.O."/>
            <person name="Pena S.D.J."/>
            <person name="Pereira J.O."/>
            <person name="Pereira M."/>
            <person name="Pinto L.S.R.C."/>
            <person name="Pinto L.S."/>
            <person name="Porto J.I.R."/>
            <person name="Potrich D.P."/>
            <person name="Ramalho-Neto C.E."/>
            <person name="Reis A.M.M."/>
            <person name="Rigo L.U."/>
            <person name="Rondinelli E."/>
            <person name="Santos E.B.P."/>
            <person name="Santos F.R."/>
            <person name="Schneider M.P.C."/>
            <person name="Seuanez H.N."/>
            <person name="Silva A.M.R."/>
            <person name="da Silva A.L.C."/>
            <person name="Silva D.W."/>
            <person name="Silva R."/>
            <person name="Simoes I.C."/>
            <person name="Simon D."/>
            <person name="Soares C.M.A."/>
            <person name="Soares R.B.A."/>
            <person name="Souza E.M."/>
            <person name="Souza K.R.L."/>
            <person name="Souza R.C."/>
            <person name="Steffens M.B.R."/>
            <person name="Steindel M."/>
            <person name="Teixeira S.R."/>
            <person name="Urmenyi T."/>
            <person name="Vettore A."/>
            <person name="Wassem R."/>
            <person name="Zaha A."/>
            <person name="Simpson A.J.G."/>
        </authorList>
    </citation>
    <scope>NUCLEOTIDE SEQUENCE [LARGE SCALE GENOMIC DNA]</scope>
    <source>
        <strain>ATCC 12472 / DSM 30191 / JCM 1249 / CCUG 213 / NBRC 12614 / NCIMB 9131 / NCTC 9757 / MK</strain>
    </source>
</reference>
<sequence length="255" mass="28842">MQIDAVTLFPEMFDSIARFGVSQRALDLGLWQFKAWNPRDFTHDNYRRVDDRPYGGGPGMVMQIEPLEQALDAARARQREAGVEASHVVYLSPQGARLTHAKAAELSQRPGLILLCGRYEGIDERLIATQVDEEISIGDYVLSGGELPAMVLADAVVRLLPGALNDAQSAYEDSFVDGLLDCPHYTRPEEYRGMRVPDVLLSGNHALIAKWRLKQSLGRTWQRRPELLQDRVLTKQESRLLAEYQQEQDIRKKPE</sequence>
<comment type="function">
    <text evidence="1">Specifically methylates guanosine-37 in various tRNAs.</text>
</comment>
<comment type="catalytic activity">
    <reaction evidence="1">
        <text>guanosine(37) in tRNA + S-adenosyl-L-methionine = N(1)-methylguanosine(37) in tRNA + S-adenosyl-L-homocysteine + H(+)</text>
        <dbReference type="Rhea" id="RHEA:36899"/>
        <dbReference type="Rhea" id="RHEA-COMP:10145"/>
        <dbReference type="Rhea" id="RHEA-COMP:10147"/>
        <dbReference type="ChEBI" id="CHEBI:15378"/>
        <dbReference type="ChEBI" id="CHEBI:57856"/>
        <dbReference type="ChEBI" id="CHEBI:59789"/>
        <dbReference type="ChEBI" id="CHEBI:73542"/>
        <dbReference type="ChEBI" id="CHEBI:74269"/>
        <dbReference type="EC" id="2.1.1.228"/>
    </reaction>
</comment>
<comment type="subunit">
    <text evidence="1">Homodimer.</text>
</comment>
<comment type="subcellular location">
    <subcellularLocation>
        <location evidence="1">Cytoplasm</location>
    </subcellularLocation>
</comment>
<comment type="similarity">
    <text evidence="1">Belongs to the RNA methyltransferase TrmD family.</text>
</comment>
<comment type="sequence caution" evidence="2">
    <conflict type="erroneous initiation">
        <sequence resource="EMBL-CDS" id="AAQ61335"/>
    </conflict>
</comment>
<gene>
    <name evidence="1" type="primary">trmD</name>
    <name type="ordered locus">CV_3673</name>
</gene>
<feature type="chain" id="PRO_0000060359" description="tRNA (guanine-N(1)-)-methyltransferase">
    <location>
        <begin position="1"/>
        <end position="255"/>
    </location>
</feature>
<feature type="binding site" evidence="1">
    <location>
        <position position="117"/>
    </location>
    <ligand>
        <name>S-adenosyl-L-methionine</name>
        <dbReference type="ChEBI" id="CHEBI:59789"/>
    </ligand>
</feature>
<feature type="binding site" evidence="1">
    <location>
        <begin position="137"/>
        <end position="142"/>
    </location>
    <ligand>
        <name>S-adenosyl-L-methionine</name>
        <dbReference type="ChEBI" id="CHEBI:59789"/>
    </ligand>
</feature>